<proteinExistence type="inferred from homology"/>
<gene>
    <name evidence="1" type="primary">rsgA</name>
    <name type="ordered locus">ECA3965</name>
</gene>
<evidence type="ECO:0000255" key="1">
    <source>
        <dbReference type="HAMAP-Rule" id="MF_01820"/>
    </source>
</evidence>
<evidence type="ECO:0000255" key="2">
    <source>
        <dbReference type="PROSITE-ProRule" id="PRU01058"/>
    </source>
</evidence>
<evidence type="ECO:0000256" key="3">
    <source>
        <dbReference type="SAM" id="MobiDB-lite"/>
    </source>
</evidence>
<accession>Q6D036</accession>
<feature type="chain" id="PRO_0000171477" description="Small ribosomal subunit biogenesis GTPase RsgA">
    <location>
        <begin position="1"/>
        <end position="349"/>
    </location>
</feature>
<feature type="domain" description="CP-type G" evidence="2">
    <location>
        <begin position="102"/>
        <end position="272"/>
    </location>
</feature>
<feature type="region of interest" description="Disordered" evidence="3">
    <location>
        <begin position="1"/>
        <end position="29"/>
    </location>
</feature>
<feature type="compositionally biased region" description="Basic residues" evidence="3">
    <location>
        <begin position="1"/>
        <end position="11"/>
    </location>
</feature>
<feature type="binding site" evidence="1">
    <location>
        <begin position="158"/>
        <end position="161"/>
    </location>
    <ligand>
        <name>GTP</name>
        <dbReference type="ChEBI" id="CHEBI:37565"/>
    </ligand>
</feature>
<feature type="binding site" evidence="1">
    <location>
        <begin position="212"/>
        <end position="220"/>
    </location>
    <ligand>
        <name>GTP</name>
        <dbReference type="ChEBI" id="CHEBI:37565"/>
    </ligand>
</feature>
<feature type="binding site" evidence="1">
    <location>
        <position position="296"/>
    </location>
    <ligand>
        <name>Zn(2+)</name>
        <dbReference type="ChEBI" id="CHEBI:29105"/>
    </ligand>
</feature>
<feature type="binding site" evidence="1">
    <location>
        <position position="301"/>
    </location>
    <ligand>
        <name>Zn(2+)</name>
        <dbReference type="ChEBI" id="CHEBI:29105"/>
    </ligand>
</feature>
<feature type="binding site" evidence="1">
    <location>
        <position position="303"/>
    </location>
    <ligand>
        <name>Zn(2+)</name>
        <dbReference type="ChEBI" id="CHEBI:29105"/>
    </ligand>
</feature>
<feature type="binding site" evidence="1">
    <location>
        <position position="309"/>
    </location>
    <ligand>
        <name>Zn(2+)</name>
        <dbReference type="ChEBI" id="CHEBI:29105"/>
    </ligand>
</feature>
<name>RSGA_PECAS</name>
<protein>
    <recommendedName>
        <fullName evidence="1">Small ribosomal subunit biogenesis GTPase RsgA</fullName>
        <ecNumber evidence="1">3.6.1.-</ecNumber>
    </recommendedName>
</protein>
<organism>
    <name type="scientific">Pectobacterium atrosepticum (strain SCRI 1043 / ATCC BAA-672)</name>
    <name type="common">Erwinia carotovora subsp. atroseptica</name>
    <dbReference type="NCBI Taxonomy" id="218491"/>
    <lineage>
        <taxon>Bacteria</taxon>
        <taxon>Pseudomonadati</taxon>
        <taxon>Pseudomonadota</taxon>
        <taxon>Gammaproteobacteria</taxon>
        <taxon>Enterobacterales</taxon>
        <taxon>Pectobacteriaceae</taxon>
        <taxon>Pectobacterium</taxon>
    </lineage>
</organism>
<sequence>MSKKKLSKGQQRRVSANHQRRLKKTESKVEWEDSQLGDAQEGIIISRFGMHADVEATDGVVRRCNIRRTISSLVTGDRVVWRPGHESLAGISGIVEAVHPRHSVLTRPDYYDGIKPIAANIDQIVIVSAILPELSLNIIDRYLVACETLEVEPLIVLNKIDLLDEKSRQLVDKSMDIYRALKYRVLMVSSHTQQGIPELEQALTDRISIFAGQSGVGKSSLLNALLALGEKRILVNEVSDNSGLGQHTTTASRLYHFPHGGDVIDSPGVREFGLWHLEPEQVTSGFIELREYIGSCKFRDCKHENDPGCAINAARERGDIARERFDNYHRILESMTQVKMRKGFSDTDN</sequence>
<reference key="1">
    <citation type="journal article" date="2004" name="Proc. Natl. Acad. Sci. U.S.A.">
        <title>Genome sequence of the enterobacterial phytopathogen Erwinia carotovora subsp. atroseptica and characterization of virulence factors.</title>
        <authorList>
            <person name="Bell K.S."/>
            <person name="Sebaihia M."/>
            <person name="Pritchard L."/>
            <person name="Holden M.T.G."/>
            <person name="Hyman L.J."/>
            <person name="Holeva M.C."/>
            <person name="Thomson N.R."/>
            <person name="Bentley S.D."/>
            <person name="Churcher L.J.C."/>
            <person name="Mungall K."/>
            <person name="Atkin R."/>
            <person name="Bason N."/>
            <person name="Brooks K."/>
            <person name="Chillingworth T."/>
            <person name="Clark K."/>
            <person name="Doggett J."/>
            <person name="Fraser A."/>
            <person name="Hance Z."/>
            <person name="Hauser H."/>
            <person name="Jagels K."/>
            <person name="Moule S."/>
            <person name="Norbertczak H."/>
            <person name="Ormond D."/>
            <person name="Price C."/>
            <person name="Quail M.A."/>
            <person name="Sanders M."/>
            <person name="Walker D."/>
            <person name="Whitehead S."/>
            <person name="Salmond G.P.C."/>
            <person name="Birch P.R.J."/>
            <person name="Parkhill J."/>
            <person name="Toth I.K."/>
        </authorList>
    </citation>
    <scope>NUCLEOTIDE SEQUENCE [LARGE SCALE GENOMIC DNA]</scope>
    <source>
        <strain>SCRI 1043 / ATCC BAA-672</strain>
    </source>
</reference>
<comment type="function">
    <text evidence="1">One of several proteins that assist in the late maturation steps of the functional core of the 30S ribosomal subunit. Helps release RbfA from mature subunits. May play a role in the assembly of ribosomal proteins into the subunit. Circularly permuted GTPase that catalyzes slow GTP hydrolysis, GTPase activity is stimulated by the 30S ribosomal subunit.</text>
</comment>
<comment type="cofactor">
    <cofactor evidence="1">
        <name>Zn(2+)</name>
        <dbReference type="ChEBI" id="CHEBI:29105"/>
    </cofactor>
    <text evidence="1">Binds 1 zinc ion per subunit.</text>
</comment>
<comment type="subunit">
    <text evidence="1">Monomer. Associates with 30S ribosomal subunit, binds 16S rRNA.</text>
</comment>
<comment type="subcellular location">
    <subcellularLocation>
        <location evidence="1">Cytoplasm</location>
    </subcellularLocation>
</comment>
<comment type="similarity">
    <text evidence="1">Belongs to the TRAFAC class YlqF/YawG GTPase family. RsgA subfamily.</text>
</comment>
<keyword id="KW-0963">Cytoplasm</keyword>
<keyword id="KW-0342">GTP-binding</keyword>
<keyword id="KW-0378">Hydrolase</keyword>
<keyword id="KW-0479">Metal-binding</keyword>
<keyword id="KW-0547">Nucleotide-binding</keyword>
<keyword id="KW-1185">Reference proteome</keyword>
<keyword id="KW-0690">Ribosome biogenesis</keyword>
<keyword id="KW-0694">RNA-binding</keyword>
<keyword id="KW-0699">rRNA-binding</keyword>
<keyword id="KW-0862">Zinc</keyword>
<dbReference type="EC" id="3.6.1.-" evidence="1"/>
<dbReference type="EMBL" id="BX950851">
    <property type="protein sequence ID" value="CAG76862.1"/>
    <property type="molecule type" value="Genomic_DNA"/>
</dbReference>
<dbReference type="RefSeq" id="WP_011095459.1">
    <property type="nucleotide sequence ID" value="NC_004547.2"/>
</dbReference>
<dbReference type="SMR" id="Q6D036"/>
<dbReference type="STRING" id="218491.ECA3965"/>
<dbReference type="GeneID" id="57210578"/>
<dbReference type="KEGG" id="eca:ECA3965"/>
<dbReference type="PATRIC" id="fig|218491.5.peg.4029"/>
<dbReference type="eggNOG" id="COG1162">
    <property type="taxonomic scope" value="Bacteria"/>
</dbReference>
<dbReference type="HOGENOM" id="CLU_033617_2_0_6"/>
<dbReference type="OrthoDB" id="9809485at2"/>
<dbReference type="Proteomes" id="UP000007966">
    <property type="component" value="Chromosome"/>
</dbReference>
<dbReference type="GO" id="GO:0005737">
    <property type="term" value="C:cytoplasm"/>
    <property type="evidence" value="ECO:0007669"/>
    <property type="project" value="UniProtKB-SubCell"/>
</dbReference>
<dbReference type="GO" id="GO:0005525">
    <property type="term" value="F:GTP binding"/>
    <property type="evidence" value="ECO:0007669"/>
    <property type="project" value="UniProtKB-UniRule"/>
</dbReference>
<dbReference type="GO" id="GO:0003924">
    <property type="term" value="F:GTPase activity"/>
    <property type="evidence" value="ECO:0007669"/>
    <property type="project" value="UniProtKB-UniRule"/>
</dbReference>
<dbReference type="GO" id="GO:0046872">
    <property type="term" value="F:metal ion binding"/>
    <property type="evidence" value="ECO:0007669"/>
    <property type="project" value="UniProtKB-KW"/>
</dbReference>
<dbReference type="GO" id="GO:0019843">
    <property type="term" value="F:rRNA binding"/>
    <property type="evidence" value="ECO:0007669"/>
    <property type="project" value="UniProtKB-KW"/>
</dbReference>
<dbReference type="GO" id="GO:0042274">
    <property type="term" value="P:ribosomal small subunit biogenesis"/>
    <property type="evidence" value="ECO:0007669"/>
    <property type="project" value="UniProtKB-UniRule"/>
</dbReference>
<dbReference type="CDD" id="cd01854">
    <property type="entry name" value="YjeQ_EngC"/>
    <property type="match status" value="1"/>
</dbReference>
<dbReference type="Gene3D" id="2.40.50.140">
    <property type="entry name" value="Nucleic acid-binding proteins"/>
    <property type="match status" value="1"/>
</dbReference>
<dbReference type="Gene3D" id="3.40.50.300">
    <property type="entry name" value="P-loop containing nucleotide triphosphate hydrolases"/>
    <property type="match status" value="1"/>
</dbReference>
<dbReference type="Gene3D" id="1.10.40.50">
    <property type="entry name" value="Probable gtpase engc, domain 3"/>
    <property type="match status" value="1"/>
</dbReference>
<dbReference type="HAMAP" id="MF_01820">
    <property type="entry name" value="GTPase_RsgA"/>
    <property type="match status" value="1"/>
</dbReference>
<dbReference type="InterPro" id="IPR030378">
    <property type="entry name" value="G_CP_dom"/>
</dbReference>
<dbReference type="InterPro" id="IPR012340">
    <property type="entry name" value="NA-bd_OB-fold"/>
</dbReference>
<dbReference type="InterPro" id="IPR027417">
    <property type="entry name" value="P-loop_NTPase"/>
</dbReference>
<dbReference type="InterPro" id="IPR004881">
    <property type="entry name" value="Ribosome_biogen_GTPase_RsgA"/>
</dbReference>
<dbReference type="InterPro" id="IPR010914">
    <property type="entry name" value="RsgA_GTPase_dom"/>
</dbReference>
<dbReference type="NCBIfam" id="NF008931">
    <property type="entry name" value="PRK12288.1"/>
    <property type="match status" value="1"/>
</dbReference>
<dbReference type="NCBIfam" id="TIGR00157">
    <property type="entry name" value="ribosome small subunit-dependent GTPase A"/>
    <property type="match status" value="1"/>
</dbReference>
<dbReference type="PANTHER" id="PTHR32120">
    <property type="entry name" value="SMALL RIBOSOMAL SUBUNIT BIOGENESIS GTPASE RSGA"/>
    <property type="match status" value="1"/>
</dbReference>
<dbReference type="PANTHER" id="PTHR32120:SF11">
    <property type="entry name" value="SMALL RIBOSOMAL SUBUNIT BIOGENESIS GTPASE RSGA 1, MITOCHONDRIAL-RELATED"/>
    <property type="match status" value="1"/>
</dbReference>
<dbReference type="Pfam" id="PF03193">
    <property type="entry name" value="RsgA_GTPase"/>
    <property type="match status" value="1"/>
</dbReference>
<dbReference type="SUPFAM" id="SSF52540">
    <property type="entry name" value="P-loop containing nucleoside triphosphate hydrolases"/>
    <property type="match status" value="1"/>
</dbReference>
<dbReference type="PROSITE" id="PS50936">
    <property type="entry name" value="ENGC_GTPASE"/>
    <property type="match status" value="1"/>
</dbReference>
<dbReference type="PROSITE" id="PS51721">
    <property type="entry name" value="G_CP"/>
    <property type="match status" value="1"/>
</dbReference>